<sequence>MARIIALDGAQGEGGGQILRSALSLSMITGQPFEMSDIRAGRAKPGLLRQHLTAVRAATEICGAQVNGDELGSQQLRFTPGPIRGGEYRFAIGSAGSCMLVLQTVLPALWFADGSSRVEVHGGTHNQAAPSADFICRVWEPLLARMGISQRTTLIKHGFYPAGGGAAATVVEPATSLRGLTLISRGETLRTTAEALLAAVPYHVGEREVATLEAHFPLAEKNVVALEGGCGPGNALLLMIQSEQLTELFAAFGVKGTSAEAVANQVAHEARRYLASPAAVGEHLADQLILPLALAGEGAFTVARASAHLLTNIAVVERFLPVRFSCEATESGYLVRVSD</sequence>
<evidence type="ECO:0000255" key="1">
    <source>
        <dbReference type="HAMAP-Rule" id="MF_00200"/>
    </source>
</evidence>
<accession>B5R7J6</accession>
<organism>
    <name type="scientific">Salmonella gallinarum (strain 287/91 / NCTC 13346)</name>
    <dbReference type="NCBI Taxonomy" id="550538"/>
    <lineage>
        <taxon>Bacteria</taxon>
        <taxon>Pseudomonadati</taxon>
        <taxon>Pseudomonadota</taxon>
        <taxon>Gammaproteobacteria</taxon>
        <taxon>Enterobacterales</taxon>
        <taxon>Enterobacteriaceae</taxon>
        <taxon>Salmonella</taxon>
    </lineage>
</organism>
<keyword id="KW-0067">ATP-binding</keyword>
<keyword id="KW-0963">Cytoplasm</keyword>
<keyword id="KW-0436">Ligase</keyword>
<keyword id="KW-0547">Nucleotide-binding</keyword>
<dbReference type="EC" id="6.5.1.4" evidence="1"/>
<dbReference type="EMBL" id="AM933173">
    <property type="protein sequence ID" value="CAR39693.1"/>
    <property type="molecule type" value="Genomic_DNA"/>
</dbReference>
<dbReference type="RefSeq" id="WP_000101024.1">
    <property type="nucleotide sequence ID" value="NC_011274.1"/>
</dbReference>
<dbReference type="SMR" id="B5R7J6"/>
<dbReference type="KEGG" id="seg:SG3920"/>
<dbReference type="HOGENOM" id="CLU_027882_0_0_6"/>
<dbReference type="Proteomes" id="UP000008321">
    <property type="component" value="Chromosome"/>
</dbReference>
<dbReference type="GO" id="GO:0005737">
    <property type="term" value="C:cytoplasm"/>
    <property type="evidence" value="ECO:0007669"/>
    <property type="project" value="UniProtKB-SubCell"/>
</dbReference>
<dbReference type="GO" id="GO:0005524">
    <property type="term" value="F:ATP binding"/>
    <property type="evidence" value="ECO:0007669"/>
    <property type="project" value="UniProtKB-KW"/>
</dbReference>
<dbReference type="GO" id="GO:0003963">
    <property type="term" value="F:RNA-3'-phosphate cyclase activity"/>
    <property type="evidence" value="ECO:0007669"/>
    <property type="project" value="UniProtKB-UniRule"/>
</dbReference>
<dbReference type="GO" id="GO:0006396">
    <property type="term" value="P:RNA processing"/>
    <property type="evidence" value="ECO:0007669"/>
    <property type="project" value="InterPro"/>
</dbReference>
<dbReference type="CDD" id="cd00874">
    <property type="entry name" value="RNA_Cyclase_Class_II"/>
    <property type="match status" value="1"/>
</dbReference>
<dbReference type="FunFam" id="3.65.10.20:FF:000002">
    <property type="entry name" value="GM19193"/>
    <property type="match status" value="1"/>
</dbReference>
<dbReference type="FunFam" id="3.30.360.20:FF:000003">
    <property type="entry name" value="RNA 3'-terminal phosphate cyclase"/>
    <property type="match status" value="1"/>
</dbReference>
<dbReference type="Gene3D" id="3.65.10.20">
    <property type="entry name" value="RNA 3'-terminal phosphate cyclase domain"/>
    <property type="match status" value="1"/>
</dbReference>
<dbReference type="Gene3D" id="3.30.360.20">
    <property type="entry name" value="RNA 3'-terminal phosphate cyclase, insert domain"/>
    <property type="match status" value="1"/>
</dbReference>
<dbReference type="HAMAP" id="MF_00200">
    <property type="entry name" value="RTC"/>
    <property type="match status" value="1"/>
</dbReference>
<dbReference type="InterPro" id="IPR013791">
    <property type="entry name" value="RNA3'-term_phos_cycl_insert"/>
</dbReference>
<dbReference type="InterPro" id="IPR023797">
    <property type="entry name" value="RNA3'_phos_cyclase_dom"/>
</dbReference>
<dbReference type="InterPro" id="IPR037136">
    <property type="entry name" value="RNA3'_phos_cyclase_dom_sf"/>
</dbReference>
<dbReference type="InterPro" id="IPR000228">
    <property type="entry name" value="RNA3'_term_phos_cyc"/>
</dbReference>
<dbReference type="InterPro" id="IPR017770">
    <property type="entry name" value="RNA3'_term_phos_cyc_type_1"/>
</dbReference>
<dbReference type="InterPro" id="IPR013792">
    <property type="entry name" value="RNA3'P_cycl/enolpyr_Trfase_a/b"/>
</dbReference>
<dbReference type="InterPro" id="IPR036553">
    <property type="entry name" value="RPTC_insert"/>
</dbReference>
<dbReference type="NCBIfam" id="NF003246">
    <property type="entry name" value="PRK04204.1-2"/>
    <property type="match status" value="1"/>
</dbReference>
<dbReference type="NCBIfam" id="NF003247">
    <property type="entry name" value="PRK04204.1-3"/>
    <property type="match status" value="1"/>
</dbReference>
<dbReference type="NCBIfam" id="TIGR03399">
    <property type="entry name" value="RNA_3prim_cycl"/>
    <property type="match status" value="1"/>
</dbReference>
<dbReference type="PANTHER" id="PTHR11096">
    <property type="entry name" value="RNA 3' TERMINAL PHOSPHATE CYCLASE"/>
    <property type="match status" value="1"/>
</dbReference>
<dbReference type="PANTHER" id="PTHR11096:SF0">
    <property type="entry name" value="RNA 3'-TERMINAL PHOSPHATE CYCLASE"/>
    <property type="match status" value="1"/>
</dbReference>
<dbReference type="Pfam" id="PF01137">
    <property type="entry name" value="RTC"/>
    <property type="match status" value="1"/>
</dbReference>
<dbReference type="Pfam" id="PF05189">
    <property type="entry name" value="RTC_insert"/>
    <property type="match status" value="1"/>
</dbReference>
<dbReference type="PIRSF" id="PIRSF005378">
    <property type="entry name" value="RNA3'_term_phos_cycl_euk"/>
    <property type="match status" value="1"/>
</dbReference>
<dbReference type="SUPFAM" id="SSF55205">
    <property type="entry name" value="EPT/RTPC-like"/>
    <property type="match status" value="2"/>
</dbReference>
<dbReference type="SUPFAM" id="SSF52913">
    <property type="entry name" value="RNA 3'-terminal phosphate cyclase, RPTC, insert domain"/>
    <property type="match status" value="1"/>
</dbReference>
<feature type="chain" id="PRO_1000099353" description="RNA 3'-terminal phosphate cyclase">
    <location>
        <begin position="1"/>
        <end position="339"/>
    </location>
</feature>
<feature type="active site" description="Tele-AMP-histidine intermediate" evidence="1">
    <location>
        <position position="308"/>
    </location>
</feature>
<feature type="binding site" evidence="1">
    <location>
        <position position="103"/>
    </location>
    <ligand>
        <name>ATP</name>
        <dbReference type="ChEBI" id="CHEBI:30616"/>
    </ligand>
</feature>
<feature type="binding site" evidence="1">
    <location>
        <begin position="283"/>
        <end position="287"/>
    </location>
    <ligand>
        <name>ATP</name>
        <dbReference type="ChEBI" id="CHEBI:30616"/>
    </ligand>
</feature>
<name>RTCA_SALG2</name>
<proteinExistence type="inferred from homology"/>
<protein>
    <recommendedName>
        <fullName evidence="1">RNA 3'-terminal phosphate cyclase</fullName>
        <shortName evidence="1">RNA cyclase</shortName>
        <shortName evidence="1">RNA-3'-phosphate cyclase</shortName>
        <ecNumber evidence="1">6.5.1.4</ecNumber>
    </recommendedName>
</protein>
<gene>
    <name evidence="1" type="primary">rtcA</name>
    <name type="ordered locus">SG3920</name>
</gene>
<comment type="function">
    <text evidence="1">Catalyzes the conversion of 3'-phosphate to a 2',3'-cyclic phosphodiester at the end of RNA. The mechanism of action of the enzyme occurs in 3 steps: (A) adenylation of the enzyme by ATP; (B) transfer of adenylate to an RNA-N3'P to produce RNA-N3'PP5'A; (C) and attack of the adjacent 2'-hydroxyl on the 3'-phosphorus in the diester linkage to produce the cyclic end product. The biological role of this enzyme is unknown but it is likely to function in some aspects of cellular RNA processing.</text>
</comment>
<comment type="catalytic activity">
    <reaction evidence="1">
        <text>a 3'-end 3'-phospho-ribonucleotide-RNA + ATP = a 3'-end 2',3'-cyclophospho-ribonucleotide-RNA + AMP + diphosphate</text>
        <dbReference type="Rhea" id="RHEA:23976"/>
        <dbReference type="Rhea" id="RHEA-COMP:10463"/>
        <dbReference type="Rhea" id="RHEA-COMP:10464"/>
        <dbReference type="ChEBI" id="CHEBI:30616"/>
        <dbReference type="ChEBI" id="CHEBI:33019"/>
        <dbReference type="ChEBI" id="CHEBI:83062"/>
        <dbReference type="ChEBI" id="CHEBI:83064"/>
        <dbReference type="ChEBI" id="CHEBI:456215"/>
        <dbReference type="EC" id="6.5.1.4"/>
    </reaction>
</comment>
<comment type="subcellular location">
    <subcellularLocation>
        <location evidence="1">Cytoplasm</location>
    </subcellularLocation>
</comment>
<comment type="similarity">
    <text evidence="1">Belongs to the RNA 3'-terminal cyclase family. Type 1 subfamily.</text>
</comment>
<reference key="1">
    <citation type="journal article" date="2008" name="Genome Res.">
        <title>Comparative genome analysis of Salmonella enteritidis PT4 and Salmonella gallinarum 287/91 provides insights into evolutionary and host adaptation pathways.</title>
        <authorList>
            <person name="Thomson N.R."/>
            <person name="Clayton D.J."/>
            <person name="Windhorst D."/>
            <person name="Vernikos G."/>
            <person name="Davidson S."/>
            <person name="Churcher C."/>
            <person name="Quail M.A."/>
            <person name="Stevens M."/>
            <person name="Jones M.A."/>
            <person name="Watson M."/>
            <person name="Barron A."/>
            <person name="Layton A."/>
            <person name="Pickard D."/>
            <person name="Kingsley R.A."/>
            <person name="Bignell A."/>
            <person name="Clark L."/>
            <person name="Harris B."/>
            <person name="Ormond D."/>
            <person name="Abdellah Z."/>
            <person name="Brooks K."/>
            <person name="Cherevach I."/>
            <person name="Chillingworth T."/>
            <person name="Woodward J."/>
            <person name="Norberczak H."/>
            <person name="Lord A."/>
            <person name="Arrowsmith C."/>
            <person name="Jagels K."/>
            <person name="Moule S."/>
            <person name="Mungall K."/>
            <person name="Saunders M."/>
            <person name="Whitehead S."/>
            <person name="Chabalgoity J.A."/>
            <person name="Maskell D."/>
            <person name="Humphreys T."/>
            <person name="Roberts M."/>
            <person name="Barrow P.A."/>
            <person name="Dougan G."/>
            <person name="Parkhill J."/>
        </authorList>
    </citation>
    <scope>NUCLEOTIDE SEQUENCE [LARGE SCALE GENOMIC DNA]</scope>
    <source>
        <strain>287/91 / NCTC 13346</strain>
    </source>
</reference>